<name>PYRG_PELPB</name>
<accession>B4SAT4</accession>
<gene>
    <name evidence="1" type="primary">pyrG</name>
    <name type="ordered locus">Ppha_0097</name>
</gene>
<organism>
    <name type="scientific">Pelodictyon phaeoclathratiforme (strain DSM 5477 / BU-1)</name>
    <dbReference type="NCBI Taxonomy" id="324925"/>
    <lineage>
        <taxon>Bacteria</taxon>
        <taxon>Pseudomonadati</taxon>
        <taxon>Chlorobiota</taxon>
        <taxon>Chlorobiia</taxon>
        <taxon>Chlorobiales</taxon>
        <taxon>Chlorobiaceae</taxon>
        <taxon>Chlorobium/Pelodictyon group</taxon>
        <taxon>Pelodictyon</taxon>
    </lineage>
</organism>
<proteinExistence type="inferred from homology"/>
<comment type="function">
    <text evidence="1">Catalyzes the ATP-dependent amination of UTP to CTP with either L-glutamine or ammonia as the source of nitrogen. Regulates intracellular CTP levels through interactions with the four ribonucleotide triphosphates.</text>
</comment>
<comment type="catalytic activity">
    <reaction evidence="1">
        <text>UTP + L-glutamine + ATP + H2O = CTP + L-glutamate + ADP + phosphate + 2 H(+)</text>
        <dbReference type="Rhea" id="RHEA:26426"/>
        <dbReference type="ChEBI" id="CHEBI:15377"/>
        <dbReference type="ChEBI" id="CHEBI:15378"/>
        <dbReference type="ChEBI" id="CHEBI:29985"/>
        <dbReference type="ChEBI" id="CHEBI:30616"/>
        <dbReference type="ChEBI" id="CHEBI:37563"/>
        <dbReference type="ChEBI" id="CHEBI:43474"/>
        <dbReference type="ChEBI" id="CHEBI:46398"/>
        <dbReference type="ChEBI" id="CHEBI:58359"/>
        <dbReference type="ChEBI" id="CHEBI:456216"/>
        <dbReference type="EC" id="6.3.4.2"/>
    </reaction>
</comment>
<comment type="catalytic activity">
    <reaction evidence="1">
        <text>L-glutamine + H2O = L-glutamate + NH4(+)</text>
        <dbReference type="Rhea" id="RHEA:15889"/>
        <dbReference type="ChEBI" id="CHEBI:15377"/>
        <dbReference type="ChEBI" id="CHEBI:28938"/>
        <dbReference type="ChEBI" id="CHEBI:29985"/>
        <dbReference type="ChEBI" id="CHEBI:58359"/>
    </reaction>
</comment>
<comment type="catalytic activity">
    <reaction evidence="1">
        <text>UTP + NH4(+) + ATP = CTP + ADP + phosphate + 2 H(+)</text>
        <dbReference type="Rhea" id="RHEA:16597"/>
        <dbReference type="ChEBI" id="CHEBI:15378"/>
        <dbReference type="ChEBI" id="CHEBI:28938"/>
        <dbReference type="ChEBI" id="CHEBI:30616"/>
        <dbReference type="ChEBI" id="CHEBI:37563"/>
        <dbReference type="ChEBI" id="CHEBI:43474"/>
        <dbReference type="ChEBI" id="CHEBI:46398"/>
        <dbReference type="ChEBI" id="CHEBI:456216"/>
    </reaction>
</comment>
<comment type="activity regulation">
    <text evidence="1">Allosterically activated by GTP, when glutamine is the substrate; GTP has no effect on the reaction when ammonia is the substrate. The allosteric effector GTP functions by stabilizing the protein conformation that binds the tetrahedral intermediate(s) formed during glutamine hydrolysis. Inhibited by the product CTP, via allosteric rather than competitive inhibition.</text>
</comment>
<comment type="pathway">
    <text evidence="1">Pyrimidine metabolism; CTP biosynthesis via de novo pathway; CTP from UDP: step 2/2.</text>
</comment>
<comment type="subunit">
    <text evidence="1">Homotetramer.</text>
</comment>
<comment type="miscellaneous">
    <text evidence="1">CTPSs have evolved a hybrid strategy for distinguishing between UTP and CTP. The overlapping regions of the product feedback inhibitory and substrate sites recognize a common feature in both compounds, the triphosphate moiety. To differentiate isosteric substrate and product pyrimidine rings, an additional pocket far from the expected kinase/ligase catalytic site, specifically recognizes the cytosine and ribose portions of the product inhibitor.</text>
</comment>
<comment type="similarity">
    <text evidence="1">Belongs to the CTP synthase family.</text>
</comment>
<protein>
    <recommendedName>
        <fullName evidence="1">CTP synthase</fullName>
        <ecNumber evidence="1">6.3.4.2</ecNumber>
    </recommendedName>
    <alternativeName>
        <fullName evidence="1">Cytidine 5'-triphosphate synthase</fullName>
    </alternativeName>
    <alternativeName>
        <fullName evidence="1">Cytidine triphosphate synthetase</fullName>
        <shortName evidence="1">CTP synthetase</shortName>
        <shortName evidence="1">CTPS</shortName>
    </alternativeName>
    <alternativeName>
        <fullName evidence="1">UTP--ammonia ligase</fullName>
    </alternativeName>
</protein>
<reference key="1">
    <citation type="submission" date="2008-06" db="EMBL/GenBank/DDBJ databases">
        <title>Complete sequence of Pelodictyon phaeoclathratiforme BU-1.</title>
        <authorList>
            <consortium name="US DOE Joint Genome Institute"/>
            <person name="Lucas S."/>
            <person name="Copeland A."/>
            <person name="Lapidus A."/>
            <person name="Glavina del Rio T."/>
            <person name="Dalin E."/>
            <person name="Tice H."/>
            <person name="Bruce D."/>
            <person name="Goodwin L."/>
            <person name="Pitluck S."/>
            <person name="Schmutz J."/>
            <person name="Larimer F."/>
            <person name="Land M."/>
            <person name="Hauser L."/>
            <person name="Kyrpides N."/>
            <person name="Mikhailova N."/>
            <person name="Liu Z."/>
            <person name="Li T."/>
            <person name="Zhao F."/>
            <person name="Overmann J."/>
            <person name="Bryant D.A."/>
            <person name="Richardson P."/>
        </authorList>
    </citation>
    <scope>NUCLEOTIDE SEQUENCE [LARGE SCALE GENOMIC DNA]</scope>
    <source>
        <strain>DSM 5477 / BU-1</strain>
    </source>
</reference>
<sequence length="565" mass="63516">MARPKNVKHIFVTGGVISSLGKGILSASLGMLLKSRGLKVAIQKYDPYINVDPGTMSPYQHGEVYVTDDGAETDLDLGHYERFLDESTTQSSNLTMGRVYKSVIDKERRGEYLGATVQVVPHVIDEIKDRMAEQAKNGDLDVLITEIGGTIGDIESLPFLEAMRQMKLEMGDSNLLNIHLTFVPYIKAASELKTKPTQHSVKMLLGVGIQPDILVCRSEKPLSREIKNKVGHFCNVNELDVIGLNDCDTIYEVPLMLLKEKLDLRVLKKLGLKKYKEPTLDYWRDFCNKVKFPQDGEVTIGICGKYTEYPDAYKSIIESFIHAGASNNVKVNVKLLRAEDAELNAFDFAKELEGINGILVAPGFGDRGIEGKIKYIQYAREHNVPFLGICLGMQCASIEFARNVCGLQDANSTEFNKRTRFPVIDLMAHQKKVKEKGGTMRLGSYPCIISEGSKAYAVYHKFLINERHRHRYEFNNAYRKNFEESGMVFSGTSPNGELVEIIELKNHRWFVAVQFHPELKSRVQKVHPVFHGFVAAAKEYAHGVHQMDLVVEMPSLVPVLTEPTQ</sequence>
<evidence type="ECO:0000255" key="1">
    <source>
        <dbReference type="HAMAP-Rule" id="MF_01227"/>
    </source>
</evidence>
<feature type="chain" id="PRO_1000139512" description="CTP synthase">
    <location>
        <begin position="1"/>
        <end position="565"/>
    </location>
</feature>
<feature type="domain" description="Glutamine amidotransferase type-1" evidence="1">
    <location>
        <begin position="299"/>
        <end position="543"/>
    </location>
</feature>
<feature type="region of interest" description="Amidoligase domain" evidence="1">
    <location>
        <begin position="1"/>
        <end position="272"/>
    </location>
</feature>
<feature type="active site" description="Nucleophile; for glutamine hydrolysis" evidence="1">
    <location>
        <position position="390"/>
    </location>
</feature>
<feature type="active site" evidence="1">
    <location>
        <position position="516"/>
    </location>
</feature>
<feature type="active site" evidence="1">
    <location>
        <position position="518"/>
    </location>
</feature>
<feature type="binding site" evidence="1">
    <location>
        <position position="18"/>
    </location>
    <ligand>
        <name>CTP</name>
        <dbReference type="ChEBI" id="CHEBI:37563"/>
        <note>allosteric inhibitor</note>
    </ligand>
</feature>
<feature type="binding site" evidence="1">
    <location>
        <position position="18"/>
    </location>
    <ligand>
        <name>UTP</name>
        <dbReference type="ChEBI" id="CHEBI:46398"/>
    </ligand>
</feature>
<feature type="binding site" evidence="1">
    <location>
        <begin position="19"/>
        <end position="24"/>
    </location>
    <ligand>
        <name>ATP</name>
        <dbReference type="ChEBI" id="CHEBI:30616"/>
    </ligand>
</feature>
<feature type="binding site" evidence="1">
    <location>
        <position position="59"/>
    </location>
    <ligand>
        <name>L-glutamine</name>
        <dbReference type="ChEBI" id="CHEBI:58359"/>
    </ligand>
</feature>
<feature type="binding site" evidence="1">
    <location>
        <position position="76"/>
    </location>
    <ligand>
        <name>ATP</name>
        <dbReference type="ChEBI" id="CHEBI:30616"/>
    </ligand>
</feature>
<feature type="binding site" evidence="1">
    <location>
        <position position="76"/>
    </location>
    <ligand>
        <name>Mg(2+)</name>
        <dbReference type="ChEBI" id="CHEBI:18420"/>
    </ligand>
</feature>
<feature type="binding site" evidence="1">
    <location>
        <position position="146"/>
    </location>
    <ligand>
        <name>Mg(2+)</name>
        <dbReference type="ChEBI" id="CHEBI:18420"/>
    </ligand>
</feature>
<feature type="binding site" evidence="1">
    <location>
        <begin position="153"/>
        <end position="155"/>
    </location>
    <ligand>
        <name>CTP</name>
        <dbReference type="ChEBI" id="CHEBI:37563"/>
        <note>allosteric inhibitor</note>
    </ligand>
</feature>
<feature type="binding site" evidence="1">
    <location>
        <begin position="193"/>
        <end position="198"/>
    </location>
    <ligand>
        <name>CTP</name>
        <dbReference type="ChEBI" id="CHEBI:37563"/>
        <note>allosteric inhibitor</note>
    </ligand>
</feature>
<feature type="binding site" evidence="1">
    <location>
        <begin position="193"/>
        <end position="198"/>
    </location>
    <ligand>
        <name>UTP</name>
        <dbReference type="ChEBI" id="CHEBI:46398"/>
    </ligand>
</feature>
<feature type="binding site" evidence="1">
    <location>
        <position position="229"/>
    </location>
    <ligand>
        <name>CTP</name>
        <dbReference type="ChEBI" id="CHEBI:37563"/>
        <note>allosteric inhibitor</note>
    </ligand>
</feature>
<feature type="binding site" evidence="1">
    <location>
        <position position="229"/>
    </location>
    <ligand>
        <name>UTP</name>
        <dbReference type="ChEBI" id="CHEBI:46398"/>
    </ligand>
</feature>
<feature type="binding site" evidence="1">
    <location>
        <position position="363"/>
    </location>
    <ligand>
        <name>L-glutamine</name>
        <dbReference type="ChEBI" id="CHEBI:58359"/>
    </ligand>
</feature>
<feature type="binding site" evidence="1">
    <location>
        <begin position="391"/>
        <end position="394"/>
    </location>
    <ligand>
        <name>L-glutamine</name>
        <dbReference type="ChEBI" id="CHEBI:58359"/>
    </ligand>
</feature>
<feature type="binding site" evidence="1">
    <location>
        <position position="414"/>
    </location>
    <ligand>
        <name>L-glutamine</name>
        <dbReference type="ChEBI" id="CHEBI:58359"/>
    </ligand>
</feature>
<feature type="binding site" evidence="1">
    <location>
        <position position="471"/>
    </location>
    <ligand>
        <name>L-glutamine</name>
        <dbReference type="ChEBI" id="CHEBI:58359"/>
    </ligand>
</feature>
<dbReference type="EC" id="6.3.4.2" evidence="1"/>
<dbReference type="EMBL" id="CP001110">
    <property type="protein sequence ID" value="ACF42453.1"/>
    <property type="molecule type" value="Genomic_DNA"/>
</dbReference>
<dbReference type="RefSeq" id="WP_012506951.1">
    <property type="nucleotide sequence ID" value="NC_011060.1"/>
</dbReference>
<dbReference type="SMR" id="B4SAT4"/>
<dbReference type="STRING" id="324925.Ppha_0097"/>
<dbReference type="MEROPS" id="C26.964"/>
<dbReference type="KEGG" id="pph:Ppha_0097"/>
<dbReference type="eggNOG" id="COG0504">
    <property type="taxonomic scope" value="Bacteria"/>
</dbReference>
<dbReference type="HOGENOM" id="CLU_011675_5_0_10"/>
<dbReference type="OrthoDB" id="9801107at2"/>
<dbReference type="UniPathway" id="UPA00159">
    <property type="reaction ID" value="UER00277"/>
</dbReference>
<dbReference type="Proteomes" id="UP000002724">
    <property type="component" value="Chromosome"/>
</dbReference>
<dbReference type="GO" id="GO:0005829">
    <property type="term" value="C:cytosol"/>
    <property type="evidence" value="ECO:0007669"/>
    <property type="project" value="TreeGrafter"/>
</dbReference>
<dbReference type="GO" id="GO:0005524">
    <property type="term" value="F:ATP binding"/>
    <property type="evidence" value="ECO:0007669"/>
    <property type="project" value="UniProtKB-KW"/>
</dbReference>
<dbReference type="GO" id="GO:0003883">
    <property type="term" value="F:CTP synthase activity"/>
    <property type="evidence" value="ECO:0007669"/>
    <property type="project" value="UniProtKB-UniRule"/>
</dbReference>
<dbReference type="GO" id="GO:0004359">
    <property type="term" value="F:glutaminase activity"/>
    <property type="evidence" value="ECO:0007669"/>
    <property type="project" value="RHEA"/>
</dbReference>
<dbReference type="GO" id="GO:0042802">
    <property type="term" value="F:identical protein binding"/>
    <property type="evidence" value="ECO:0007669"/>
    <property type="project" value="TreeGrafter"/>
</dbReference>
<dbReference type="GO" id="GO:0046872">
    <property type="term" value="F:metal ion binding"/>
    <property type="evidence" value="ECO:0007669"/>
    <property type="project" value="UniProtKB-KW"/>
</dbReference>
<dbReference type="GO" id="GO:0044210">
    <property type="term" value="P:'de novo' CTP biosynthetic process"/>
    <property type="evidence" value="ECO:0007669"/>
    <property type="project" value="UniProtKB-UniRule"/>
</dbReference>
<dbReference type="GO" id="GO:0019856">
    <property type="term" value="P:pyrimidine nucleobase biosynthetic process"/>
    <property type="evidence" value="ECO:0007669"/>
    <property type="project" value="TreeGrafter"/>
</dbReference>
<dbReference type="CDD" id="cd03113">
    <property type="entry name" value="CTPS_N"/>
    <property type="match status" value="1"/>
</dbReference>
<dbReference type="CDD" id="cd01746">
    <property type="entry name" value="GATase1_CTP_Synthase"/>
    <property type="match status" value="1"/>
</dbReference>
<dbReference type="FunFam" id="3.40.50.300:FF:000009">
    <property type="entry name" value="CTP synthase"/>
    <property type="match status" value="1"/>
</dbReference>
<dbReference type="FunFam" id="3.40.50.880:FF:000002">
    <property type="entry name" value="CTP synthase"/>
    <property type="match status" value="1"/>
</dbReference>
<dbReference type="Gene3D" id="3.40.50.880">
    <property type="match status" value="1"/>
</dbReference>
<dbReference type="Gene3D" id="3.40.50.300">
    <property type="entry name" value="P-loop containing nucleotide triphosphate hydrolases"/>
    <property type="match status" value="1"/>
</dbReference>
<dbReference type="HAMAP" id="MF_01227">
    <property type="entry name" value="PyrG"/>
    <property type="match status" value="1"/>
</dbReference>
<dbReference type="InterPro" id="IPR029062">
    <property type="entry name" value="Class_I_gatase-like"/>
</dbReference>
<dbReference type="InterPro" id="IPR004468">
    <property type="entry name" value="CTP_synthase"/>
</dbReference>
<dbReference type="InterPro" id="IPR017456">
    <property type="entry name" value="CTP_synthase_N"/>
</dbReference>
<dbReference type="InterPro" id="IPR017926">
    <property type="entry name" value="GATASE"/>
</dbReference>
<dbReference type="InterPro" id="IPR033828">
    <property type="entry name" value="GATase1_CTP_Synthase"/>
</dbReference>
<dbReference type="InterPro" id="IPR027417">
    <property type="entry name" value="P-loop_NTPase"/>
</dbReference>
<dbReference type="NCBIfam" id="NF003792">
    <property type="entry name" value="PRK05380.1"/>
    <property type="match status" value="1"/>
</dbReference>
<dbReference type="NCBIfam" id="TIGR00337">
    <property type="entry name" value="PyrG"/>
    <property type="match status" value="1"/>
</dbReference>
<dbReference type="PANTHER" id="PTHR11550">
    <property type="entry name" value="CTP SYNTHASE"/>
    <property type="match status" value="1"/>
</dbReference>
<dbReference type="PANTHER" id="PTHR11550:SF0">
    <property type="entry name" value="CTP SYNTHASE-RELATED"/>
    <property type="match status" value="1"/>
</dbReference>
<dbReference type="Pfam" id="PF06418">
    <property type="entry name" value="CTP_synth_N"/>
    <property type="match status" value="1"/>
</dbReference>
<dbReference type="Pfam" id="PF00117">
    <property type="entry name" value="GATase"/>
    <property type="match status" value="1"/>
</dbReference>
<dbReference type="SUPFAM" id="SSF52317">
    <property type="entry name" value="Class I glutamine amidotransferase-like"/>
    <property type="match status" value="1"/>
</dbReference>
<dbReference type="SUPFAM" id="SSF52540">
    <property type="entry name" value="P-loop containing nucleoside triphosphate hydrolases"/>
    <property type="match status" value="1"/>
</dbReference>
<dbReference type="PROSITE" id="PS51273">
    <property type="entry name" value="GATASE_TYPE_1"/>
    <property type="match status" value="1"/>
</dbReference>
<keyword id="KW-0067">ATP-binding</keyword>
<keyword id="KW-0315">Glutamine amidotransferase</keyword>
<keyword id="KW-0436">Ligase</keyword>
<keyword id="KW-0460">Magnesium</keyword>
<keyword id="KW-0479">Metal-binding</keyword>
<keyword id="KW-0547">Nucleotide-binding</keyword>
<keyword id="KW-0665">Pyrimidine biosynthesis</keyword>
<keyword id="KW-1185">Reference proteome</keyword>